<accession>A9R154</accession>
<protein>
    <recommendedName>
        <fullName evidence="1">RNA polymerase-associated protein RapA</fullName>
        <ecNumber evidence="1">3.6.4.-</ecNumber>
    </recommendedName>
    <alternativeName>
        <fullName evidence="1">ATP-dependent helicase HepA</fullName>
    </alternativeName>
</protein>
<keyword id="KW-0010">Activator</keyword>
<keyword id="KW-0067">ATP-binding</keyword>
<keyword id="KW-0238">DNA-binding</keyword>
<keyword id="KW-0347">Helicase</keyword>
<keyword id="KW-0378">Hydrolase</keyword>
<keyword id="KW-0547">Nucleotide-binding</keyword>
<keyword id="KW-0804">Transcription</keyword>
<keyword id="KW-0805">Transcription regulation</keyword>
<gene>
    <name evidence="1" type="primary">rapA</name>
    <name type="ordered locus">YpAngola_A2948</name>
</gene>
<evidence type="ECO:0000255" key="1">
    <source>
        <dbReference type="HAMAP-Rule" id="MF_01821"/>
    </source>
</evidence>
<comment type="function">
    <text evidence="1">Transcription regulator that activates transcription by stimulating RNA polymerase (RNAP) recycling in case of stress conditions such as supercoiled DNA or high salt concentrations. Probably acts by releasing the RNAP, when it is trapped or immobilized on tightly supercoiled DNA. Does not activate transcription on linear DNA. Probably not involved in DNA repair.</text>
</comment>
<comment type="subunit">
    <text evidence="1">Interacts with the RNAP. Has a higher affinity for the core RNAP than for the holoenzyme. Its ATPase activity is stimulated by binding to RNAP.</text>
</comment>
<comment type="similarity">
    <text evidence="1">Belongs to the SNF2/RAD54 helicase family. RapA subfamily.</text>
</comment>
<reference key="1">
    <citation type="journal article" date="2010" name="J. Bacteriol.">
        <title>Genome sequence of the deep-rooted Yersinia pestis strain Angola reveals new insights into the evolution and pangenome of the plague bacterium.</title>
        <authorList>
            <person name="Eppinger M."/>
            <person name="Worsham P.L."/>
            <person name="Nikolich M.P."/>
            <person name="Riley D.R."/>
            <person name="Sebastian Y."/>
            <person name="Mou S."/>
            <person name="Achtman M."/>
            <person name="Lindler L.E."/>
            <person name="Ravel J."/>
        </authorList>
    </citation>
    <scope>NUCLEOTIDE SEQUENCE [LARGE SCALE GENOMIC DNA]</scope>
    <source>
        <strain>Angola</strain>
    </source>
</reference>
<sequence length="968" mass="110127">MPFTLGQRWISDTESELGLGTVVAIDVRMITLLFPATGENRLYARNDSPITRVMFNPSDTITHHEGWQLKVEEVTQENGLITYIGTRLDTEETGVAMREVLLDSKLTFSKPQDRLFAGQIDRMDRFALRFRARKYQSEQFRLPWSGLRGIRASLIPHQLHIAYEVGQRHAPRVLLADEVGLGKTIEAGMIIHQQLLAGRAERVLIVVPESLQHQWLVEMLRRFNLRFSLFDDSRYSEALLDSSNPFDTEQMVICSLDFVRRNKQRLEQLADASWDLLVVDEAHHMAWSEEAPSREYQVIEQLAEHIPGVLLLTATPEQLGQQSHFARLRLLDPDRFHDYEEFVNEQQKYRPIADAVTLLLGGERLTDDKLNLLGELIDEQDIEPLLKAANSQSEDSEAARQELVTMLMDRHGTSRVLFRNTRNGVKGFPHRVLHQIKLPLPTQYQTAIKVSGIMGAKKTLDARAKDMLYPEQIYQEFEGENATWWNFDPRVEWLLNYLVANRGEKVLVICAQAATALQLEQVLREREAIRAAVFHEGLSLIERDRAAAYFASEEDGAQVLLCSEIGSEGRNFQFACQLVMFDLPFNPDLLEQRIGRLDRIGQNREIQIMVPYLEDTAQAILVRWYHEGLDAFEHTCPTGRTIYDSSYQELISYLATPSEQEGLDEFIHTCRQQHEGLKLQLEQGRDRLLEMHSNGGEHGQELAQSIAEQDNDINLVSFALNLFDIVGINQEDRSDNLIVLTPSDHMLVPDFPGLPPDGCTVTFDREQALSREDAQFVSWEHPIIRNGLDLILSGDTGSCAVSLLKNKALPVGTLLAELVYVVEAQAPKHLQLTRFLPPTPVRMLMDRNGTNLAAQVEFESFNRQLNAVNRHTSSKLVNAVQQEVHTMLQQAEALVEAQAQALIETAKREADDKLSTELARLEALKAVNPNIRDDEIEALEHNRKMVLENLNQAGWRLDAIRLVVVTHQ</sequence>
<organism>
    <name type="scientific">Yersinia pestis bv. Antiqua (strain Angola)</name>
    <dbReference type="NCBI Taxonomy" id="349746"/>
    <lineage>
        <taxon>Bacteria</taxon>
        <taxon>Pseudomonadati</taxon>
        <taxon>Pseudomonadota</taxon>
        <taxon>Gammaproteobacteria</taxon>
        <taxon>Enterobacterales</taxon>
        <taxon>Yersiniaceae</taxon>
        <taxon>Yersinia</taxon>
    </lineage>
</organism>
<dbReference type="EC" id="3.6.4.-" evidence="1"/>
<dbReference type="EMBL" id="CP000901">
    <property type="protein sequence ID" value="ABX87696.1"/>
    <property type="molecule type" value="Genomic_DNA"/>
</dbReference>
<dbReference type="RefSeq" id="WP_002220588.1">
    <property type="nucleotide sequence ID" value="NZ_CP009935.1"/>
</dbReference>
<dbReference type="SMR" id="A9R154"/>
<dbReference type="GeneID" id="57974093"/>
<dbReference type="KEGG" id="ypg:YpAngola_A2948"/>
<dbReference type="PATRIC" id="fig|349746.12.peg.3995"/>
<dbReference type="GO" id="GO:0005524">
    <property type="term" value="F:ATP binding"/>
    <property type="evidence" value="ECO:0007669"/>
    <property type="project" value="UniProtKB-UniRule"/>
</dbReference>
<dbReference type="GO" id="GO:0003677">
    <property type="term" value="F:DNA binding"/>
    <property type="evidence" value="ECO:0007669"/>
    <property type="project" value="UniProtKB-KW"/>
</dbReference>
<dbReference type="GO" id="GO:0004386">
    <property type="term" value="F:helicase activity"/>
    <property type="evidence" value="ECO:0007669"/>
    <property type="project" value="UniProtKB-UniRule"/>
</dbReference>
<dbReference type="GO" id="GO:0016817">
    <property type="term" value="F:hydrolase activity, acting on acid anhydrides"/>
    <property type="evidence" value="ECO:0007669"/>
    <property type="project" value="InterPro"/>
</dbReference>
<dbReference type="GO" id="GO:0006355">
    <property type="term" value="P:regulation of DNA-templated transcription"/>
    <property type="evidence" value="ECO:0007669"/>
    <property type="project" value="UniProtKB-UniRule"/>
</dbReference>
<dbReference type="CDD" id="cd18011">
    <property type="entry name" value="DEXDc_RapA"/>
    <property type="match status" value="1"/>
</dbReference>
<dbReference type="CDD" id="cd18793">
    <property type="entry name" value="SF2_C_SNF"/>
    <property type="match status" value="1"/>
</dbReference>
<dbReference type="FunFam" id="3.40.50.10810:FF:000012">
    <property type="entry name" value="RNA polymerase-associated protein RapA"/>
    <property type="match status" value="1"/>
</dbReference>
<dbReference type="Gene3D" id="2.30.30.140">
    <property type="match status" value="1"/>
</dbReference>
<dbReference type="Gene3D" id="2.30.30.930">
    <property type="match status" value="1"/>
</dbReference>
<dbReference type="Gene3D" id="3.30.360.80">
    <property type="match status" value="1"/>
</dbReference>
<dbReference type="Gene3D" id="6.10.140.1500">
    <property type="match status" value="1"/>
</dbReference>
<dbReference type="Gene3D" id="6.10.140.2230">
    <property type="match status" value="1"/>
</dbReference>
<dbReference type="Gene3D" id="3.40.50.300">
    <property type="entry name" value="P-loop containing nucleotide triphosphate hydrolases"/>
    <property type="match status" value="1"/>
</dbReference>
<dbReference type="Gene3D" id="3.40.50.10810">
    <property type="entry name" value="Tandem AAA-ATPase domain"/>
    <property type="match status" value="1"/>
</dbReference>
<dbReference type="HAMAP" id="MF_01821">
    <property type="entry name" value="Helicase_RapA"/>
    <property type="match status" value="1"/>
</dbReference>
<dbReference type="InterPro" id="IPR014001">
    <property type="entry name" value="Helicase_ATP-bd"/>
</dbReference>
<dbReference type="InterPro" id="IPR001650">
    <property type="entry name" value="Helicase_C-like"/>
</dbReference>
<dbReference type="InterPro" id="IPR023949">
    <property type="entry name" value="Helicase_RapA"/>
</dbReference>
<dbReference type="InterPro" id="IPR027417">
    <property type="entry name" value="P-loop_NTPase"/>
</dbReference>
<dbReference type="InterPro" id="IPR022737">
    <property type="entry name" value="RapA_C"/>
</dbReference>
<dbReference type="InterPro" id="IPR038718">
    <property type="entry name" value="SNF2-like_sf"/>
</dbReference>
<dbReference type="InterPro" id="IPR049730">
    <property type="entry name" value="SNF2/RAD54-like_C"/>
</dbReference>
<dbReference type="InterPro" id="IPR000330">
    <property type="entry name" value="SNF2_N"/>
</dbReference>
<dbReference type="InterPro" id="IPR040765">
    <property type="entry name" value="Tudor_1_RapA"/>
</dbReference>
<dbReference type="InterPro" id="IPR040766">
    <property type="entry name" value="Tudor_2_RapA"/>
</dbReference>
<dbReference type="NCBIfam" id="NF003426">
    <property type="entry name" value="PRK04914.1"/>
    <property type="match status" value="1"/>
</dbReference>
<dbReference type="PANTHER" id="PTHR45766">
    <property type="entry name" value="DNA ANNEALING HELICASE AND ENDONUCLEASE ZRANB3 FAMILY MEMBER"/>
    <property type="match status" value="1"/>
</dbReference>
<dbReference type="PANTHER" id="PTHR45766:SF6">
    <property type="entry name" value="SWI_SNF-RELATED MATRIX-ASSOCIATED ACTIN-DEPENDENT REGULATOR OF CHROMATIN SUBFAMILY A-LIKE PROTEIN 1"/>
    <property type="match status" value="1"/>
</dbReference>
<dbReference type="Pfam" id="PF00271">
    <property type="entry name" value="Helicase_C"/>
    <property type="match status" value="1"/>
</dbReference>
<dbReference type="Pfam" id="PF12137">
    <property type="entry name" value="RapA_C"/>
    <property type="match status" value="1"/>
</dbReference>
<dbReference type="Pfam" id="PF00176">
    <property type="entry name" value="SNF2-rel_dom"/>
    <property type="match status" value="1"/>
</dbReference>
<dbReference type="Pfam" id="PF18339">
    <property type="entry name" value="Tudor_1_RapA"/>
    <property type="match status" value="1"/>
</dbReference>
<dbReference type="Pfam" id="PF18337">
    <property type="entry name" value="Tudor_RapA"/>
    <property type="match status" value="1"/>
</dbReference>
<dbReference type="SMART" id="SM00487">
    <property type="entry name" value="DEXDc"/>
    <property type="match status" value="1"/>
</dbReference>
<dbReference type="SMART" id="SM00490">
    <property type="entry name" value="HELICc"/>
    <property type="match status" value="1"/>
</dbReference>
<dbReference type="SUPFAM" id="SSF52540">
    <property type="entry name" value="P-loop containing nucleoside triphosphate hydrolases"/>
    <property type="match status" value="2"/>
</dbReference>
<dbReference type="PROSITE" id="PS51192">
    <property type="entry name" value="HELICASE_ATP_BIND_1"/>
    <property type="match status" value="1"/>
</dbReference>
<dbReference type="PROSITE" id="PS51194">
    <property type="entry name" value="HELICASE_CTER"/>
    <property type="match status" value="1"/>
</dbReference>
<proteinExistence type="inferred from homology"/>
<name>RAPA_YERPG</name>
<feature type="chain" id="PRO_1000188199" description="RNA polymerase-associated protein RapA">
    <location>
        <begin position="1"/>
        <end position="968"/>
    </location>
</feature>
<feature type="domain" description="Helicase ATP-binding" evidence="1">
    <location>
        <begin position="164"/>
        <end position="334"/>
    </location>
</feature>
<feature type="domain" description="Helicase C-terminal" evidence="1">
    <location>
        <begin position="490"/>
        <end position="644"/>
    </location>
</feature>
<feature type="short sequence motif" description="DEAH box">
    <location>
        <begin position="280"/>
        <end position="283"/>
    </location>
</feature>
<feature type="binding site" evidence="1">
    <location>
        <begin position="177"/>
        <end position="184"/>
    </location>
    <ligand>
        <name>ATP</name>
        <dbReference type="ChEBI" id="CHEBI:30616"/>
    </ligand>
</feature>